<name>DYDC1_HUMAN</name>
<keyword id="KW-0025">Alternative splicing</keyword>
<keyword id="KW-0966">Cell projection</keyword>
<keyword id="KW-0969">Cilium</keyword>
<keyword id="KW-0963">Cytoplasm</keyword>
<keyword id="KW-0206">Cytoskeleton</keyword>
<keyword id="KW-0282">Flagellum</keyword>
<keyword id="KW-1267">Proteomics identification</keyword>
<keyword id="KW-1185">Reference proteome</keyword>
<comment type="function">
    <text evidence="1 2">Functions as part of axonemal radial spoke complexes that play an important part in the motility of sperm and cilia (By similarity). Plays a crucial role during acrosome biogenesis (PubMed:19545932).</text>
</comment>
<comment type="subunit">
    <text evidence="1 2">Component of the axonemal radial spoke complex 1 (RS1), at least composed of spoke head proteins RSPH1, RSPH3, RSPH9 and the cilia-specific component RSPH4A or sperm-specific component RSPH6A, spoke stalk proteins RSPH14, DNAJB13, DYDC1, ROPN1L and NME5, and the anchor protein IQUB (By similarity). Interacts with SH3GL3 (PubMed:19545932).</text>
</comment>
<comment type="interaction">
    <interactant intactId="EBI-740680">
        <id>Q8WWB3</id>
    </interactant>
    <interactant intactId="EBI-10175300">
        <id>Q8TD31-3</id>
        <label>CCHCR1</label>
    </interactant>
    <organismsDiffer>false</organismsDiffer>
    <experiments>3</experiments>
</comment>
<comment type="interaction">
    <interactant intactId="EBI-740680">
        <id>Q8WWB3</id>
    </interactant>
    <interactant intactId="EBI-395261">
        <id>P24863</id>
        <label>CCNC</label>
    </interactant>
    <organismsDiffer>false</organismsDiffer>
    <experiments>3</experiments>
</comment>
<comment type="interaction">
    <interactant intactId="EBI-740680">
        <id>Q8WWB3</id>
    </interactant>
    <interactant intactId="EBI-10181988">
        <id>Q8IYX8-2</id>
        <label>CEP57L1</label>
    </interactant>
    <organismsDiffer>false</organismsDiffer>
    <experiments>3</experiments>
</comment>
<comment type="interaction">
    <interactant intactId="EBI-740680">
        <id>Q8WWB3</id>
    </interactant>
    <interactant intactId="EBI-744973">
        <id>Q9C005</id>
        <label>DPY30</label>
    </interactant>
    <organismsDiffer>false</organismsDiffer>
    <experiments>4</experiments>
</comment>
<comment type="interaction">
    <interactant intactId="EBI-740680">
        <id>Q8WWB3</id>
    </interactant>
    <interactant intactId="EBI-744099">
        <id>Q9H0I2</id>
        <label>ENKD1</label>
    </interactant>
    <organismsDiffer>false</organismsDiffer>
    <experiments>3</experiments>
</comment>
<comment type="interaction">
    <interactant intactId="EBI-740680">
        <id>Q8WWB3</id>
    </interactant>
    <interactant intactId="EBI-11953488">
        <id>P56524-2</id>
        <label>HDAC4</label>
    </interactant>
    <organismsDiffer>false</organismsDiffer>
    <experiments>3</experiments>
</comment>
<comment type="interaction">
    <interactant intactId="EBI-740680">
        <id>Q8WWB3</id>
    </interactant>
    <interactant intactId="EBI-16429135">
        <id>A0A0S2Z4Q4</id>
        <label>HGS</label>
    </interactant>
    <organismsDiffer>false</organismsDiffer>
    <experiments>3</experiments>
</comment>
<comment type="interaction">
    <interactant intactId="EBI-740680">
        <id>Q8WWB3</id>
    </interactant>
    <interactant intactId="EBI-740220">
        <id>O14964</id>
        <label>HGS</label>
    </interactant>
    <organismsDiffer>false</organismsDiffer>
    <experiments>3</experiments>
</comment>
<comment type="interaction">
    <interactant intactId="EBI-740680">
        <id>Q8WWB3</id>
    </interactant>
    <interactant intactId="EBI-2949715">
        <id>O95678</id>
        <label>KRT75</label>
    </interactant>
    <organismsDiffer>false</organismsDiffer>
    <experiments>3</experiments>
</comment>
<comment type="interaction">
    <interactant intactId="EBI-740680">
        <id>Q8WWB3</id>
    </interactant>
    <interactant intactId="EBI-11959475">
        <id>P25791-3</id>
        <label>LMO2</label>
    </interactant>
    <organismsDiffer>false</organismsDiffer>
    <experiments>3</experiments>
</comment>
<comment type="interaction">
    <interactant intactId="EBI-740680">
        <id>Q8WWB3</id>
    </interactant>
    <interactant intactId="EBI-739832">
        <id>Q8TBB1</id>
        <label>LNX1</label>
    </interactant>
    <organismsDiffer>false</organismsDiffer>
    <experiments>3</experiments>
</comment>
<comment type="interaction">
    <interactant intactId="EBI-740680">
        <id>Q8WWB3</id>
    </interactant>
    <interactant intactId="EBI-10172526">
        <id>Q9UJV3-2</id>
        <label>MID2</label>
    </interactant>
    <organismsDiffer>false</organismsDiffer>
    <experiments>3</experiments>
</comment>
<comment type="interaction">
    <interactant intactId="EBI-740680">
        <id>Q8WWB3</id>
    </interactant>
    <interactant intactId="EBI-1757866">
        <id>P00540</id>
        <label>MOS</label>
    </interactant>
    <organismsDiffer>false</organismsDiffer>
    <experiments>3</experiments>
</comment>
<comment type="interaction">
    <interactant intactId="EBI-740680">
        <id>Q8WWB3</id>
    </interactant>
    <interactant intactId="EBI-740667">
        <id>P56597</id>
        <label>NME5</label>
    </interactant>
    <organismsDiffer>false</organismsDiffer>
    <experiments>8</experiments>
</comment>
<comment type="interaction">
    <interactant intactId="EBI-740680">
        <id>Q8WWB3</id>
    </interactant>
    <interactant intactId="EBI-10239064">
        <id>Q17RL8</id>
        <label>PDZD4</label>
    </interactant>
    <organismsDiffer>false</organismsDiffer>
    <experiments>3</experiments>
</comment>
<comment type="interaction">
    <interactant intactId="EBI-740680">
        <id>Q8WWB3</id>
    </interactant>
    <interactant intactId="EBI-346930">
        <id>O00459</id>
        <label>PIK3R2</label>
    </interactant>
    <organismsDiffer>false</organismsDiffer>
    <experiments>3</experiments>
</comment>
<comment type="interaction">
    <interactant intactId="EBI-740680">
        <id>Q8WWB3</id>
    </interactant>
    <interactant intactId="EBI-602382">
        <id>Q16512</id>
        <label>PKN1</label>
    </interactant>
    <organismsDiffer>false</organismsDiffer>
    <experiments>3</experiments>
</comment>
<comment type="interaction">
    <interactant intactId="EBI-740680">
        <id>Q8WWB3</id>
    </interactant>
    <interactant intactId="EBI-12029004">
        <id>P78424</id>
        <label>POU6F2</label>
    </interactant>
    <organismsDiffer>false</organismsDiffer>
    <experiments>3</experiments>
</comment>
<comment type="interaction">
    <interactant intactId="EBI-740680">
        <id>Q8WWB3</id>
    </interactant>
    <interactant intactId="EBI-396563">
        <id>Q14738</id>
        <label>PPP2R5D</label>
    </interactant>
    <organismsDiffer>false</organismsDiffer>
    <experiments>3</experiments>
</comment>
<comment type="interaction">
    <interactant intactId="EBI-740680">
        <id>Q8WWB3</id>
    </interactant>
    <interactant intactId="EBI-359352">
        <id>P25786</id>
        <label>PSMA1</label>
    </interactant>
    <organismsDiffer>false</organismsDiffer>
    <experiments>3</experiments>
</comment>
<comment type="interaction">
    <interactant intactId="EBI-740680">
        <id>Q8WWB3</id>
    </interactant>
    <interactant intactId="EBI-740781">
        <id>Q9BT92</id>
        <label>TCHP</label>
    </interactant>
    <organismsDiffer>false</organismsDiffer>
    <experiments>6</experiments>
</comment>
<comment type="interaction">
    <interactant intactId="EBI-740680">
        <id>Q8WWB3</id>
    </interactant>
    <interactant intactId="EBI-747736">
        <id>Q15561</id>
        <label>TEAD4</label>
    </interactant>
    <organismsDiffer>false</organismsDiffer>
    <experiments>3</experiments>
</comment>
<comment type="interaction">
    <interactant intactId="EBI-740680">
        <id>Q8WWB3</id>
    </interactant>
    <interactant intactId="EBI-10178002">
        <id>P0C1Z6-2</id>
        <label>TFPT</label>
    </interactant>
    <organismsDiffer>false</organismsDiffer>
    <experiments>3</experiments>
</comment>
<comment type="interaction">
    <interactant intactId="EBI-740680">
        <id>Q8WWB3</id>
    </interactant>
    <interactant intactId="EBI-11741437">
        <id>Q08117-2</id>
        <label>TLE5</label>
    </interactant>
    <organismsDiffer>false</organismsDiffer>
    <experiments>3</experiments>
</comment>
<comment type="interaction">
    <interactant intactId="EBI-740680">
        <id>Q8WWB3</id>
    </interactant>
    <interactant intactId="EBI-10241197">
        <id>Q3SY00</id>
        <label>TSGA10IP</label>
    </interactant>
    <organismsDiffer>false</organismsDiffer>
    <experiments>3</experiments>
</comment>
<comment type="interaction">
    <interactant intactId="EBI-740680">
        <id>Q8WWB3</id>
    </interactant>
    <interactant intactId="EBI-6116822">
        <id>Q8N3L3</id>
        <label>TXLNB</label>
    </interactant>
    <organismsDiffer>false</organismsDiffer>
    <experiments>6</experiments>
</comment>
<comment type="interaction">
    <interactant intactId="EBI-740680">
        <id>Q8WWB3</id>
    </interactant>
    <interactant intactId="EBI-707554">
        <id>O14530</id>
        <label>TXNDC9</label>
    </interactant>
    <organismsDiffer>false</organismsDiffer>
    <experiments>3</experiments>
</comment>
<comment type="interaction">
    <interactant intactId="EBI-740680">
        <id>Q8WWB3</id>
    </interactant>
    <interactant intactId="EBI-739895">
        <id>Q8N6Y0</id>
        <label>USHBP1</label>
    </interactant>
    <organismsDiffer>false</organismsDiffer>
    <experiments>7</experiments>
</comment>
<comment type="interaction">
    <interactant intactId="EBI-740680">
        <id>Q8WWB3</id>
    </interactant>
    <interactant intactId="EBI-743272">
        <id>O75604</id>
        <label>USP2</label>
    </interactant>
    <organismsDiffer>false</organismsDiffer>
    <experiments>3</experiments>
</comment>
<comment type="interaction">
    <interactant intactId="EBI-740680">
        <id>Q8WWB3</id>
    </interactant>
    <interactant intactId="EBI-2559305">
        <id>A5D8V6</id>
        <label>VPS37C</label>
    </interactant>
    <organismsDiffer>false</organismsDiffer>
    <experiments>3</experiments>
</comment>
<comment type="interaction">
    <interactant intactId="EBI-740680">
        <id>Q8WWB3</id>
    </interactant>
    <interactant intactId="EBI-9031083">
        <id>Q9Y2B5</id>
        <label>VPS9D1</label>
    </interactant>
    <organismsDiffer>false</organismsDiffer>
    <experiments>3</experiments>
</comment>
<comment type="interaction">
    <interactant intactId="EBI-740680">
        <id>Q8WWB3</id>
    </interactant>
    <interactant intactId="EBI-749118">
        <id>Q9BTA9</id>
        <label>WAC</label>
    </interactant>
    <organismsDiffer>false</organismsDiffer>
    <experiments>3</experiments>
</comment>
<comment type="interaction">
    <interactant intactId="EBI-740680">
        <id>Q8WWB3</id>
    </interactant>
    <interactant intactId="EBI-3439227">
        <id>Q8N5A5</id>
        <label>ZGPAT</label>
    </interactant>
    <organismsDiffer>false</organismsDiffer>
    <experiments>3</experiments>
</comment>
<comment type="subcellular location">
    <subcellularLocation>
        <location evidence="1">Cytoplasm</location>
        <location evidence="1">Cytoskeleton</location>
        <location evidence="1">Flagellum axoneme</location>
    </subcellularLocation>
</comment>
<comment type="alternative products">
    <event type="alternative splicing"/>
    <isoform>
        <id>Q8WWB3-1</id>
        <name>1</name>
        <sequence type="displayed"/>
    </isoform>
    <isoform>
        <id>Q8WWB3-2</id>
        <name>2</name>
        <sequence type="described" ref="VSP_056983"/>
    </isoform>
</comment>
<comment type="tissue specificity">
    <text evidence="2">Brain and testis. Accumulates during late stage of spermiogenesis.</text>
</comment>
<comment type="similarity">
    <text evidence="4">Belongs to the dpy-30 family.</text>
</comment>
<comment type="caution">
    <text evidence="4">Sequence AAQ84766 was incorrectly indicated as originating from mouse.</text>
</comment>
<comment type="sequence caution" evidence="4">
    <conflict type="miscellaneous discrepancy">
        <sequence resource="EMBL-CDS" id="BAC86339"/>
    </conflict>
    <text>Intron retention.</text>
</comment>
<feature type="chain" id="PRO_0000247556" description="DPY30 domain-containing protein 1">
    <location>
        <begin position="1"/>
        <end position="177"/>
    </location>
</feature>
<feature type="splice variant" id="VSP_056983" description="In isoform 2." evidence="3">
    <original>IALNIDQDL</original>
    <variation>VSISVFCEKTRFCFCF</variation>
    <location>
        <begin position="169"/>
        <end position="177"/>
    </location>
</feature>
<proteinExistence type="evidence at protein level"/>
<dbReference type="EMBL" id="AY278322">
    <property type="protein sequence ID" value="AAQ84766.1"/>
    <property type="molecule type" value="mRNA"/>
</dbReference>
<dbReference type="EMBL" id="AK125908">
    <property type="protein sequence ID" value="BAC86339.1"/>
    <property type="status" value="ALT_SEQ"/>
    <property type="molecule type" value="mRNA"/>
</dbReference>
<dbReference type="EMBL" id="AK292542">
    <property type="protein sequence ID" value="BAF85231.1"/>
    <property type="molecule type" value="mRNA"/>
</dbReference>
<dbReference type="EMBL" id="AL359195">
    <property type="status" value="NOT_ANNOTATED_CDS"/>
    <property type="molecule type" value="Genomic_DNA"/>
</dbReference>
<dbReference type="EMBL" id="BC019250">
    <property type="protein sequence ID" value="AAH19250.1"/>
    <property type="molecule type" value="mRNA"/>
</dbReference>
<dbReference type="CCDS" id="CCDS7366.1">
    <molecule id="Q8WWB3-1"/>
</dbReference>
<dbReference type="RefSeq" id="NP_001255982.1">
    <molecule id="Q8WWB3-1"/>
    <property type="nucleotide sequence ID" value="NM_001269053.2"/>
</dbReference>
<dbReference type="RefSeq" id="NP_001357084.1">
    <molecule id="Q8WWB3-1"/>
    <property type="nucleotide sequence ID" value="NM_001370155.1"/>
</dbReference>
<dbReference type="RefSeq" id="NP_001357085.1">
    <molecule id="Q8WWB3-1"/>
    <property type="nucleotide sequence ID" value="NM_001370156.1"/>
</dbReference>
<dbReference type="RefSeq" id="NP_620167.1">
    <molecule id="Q8WWB3-1"/>
    <property type="nucleotide sequence ID" value="NM_138812.4"/>
</dbReference>
<dbReference type="RefSeq" id="XP_005269606.1">
    <molecule id="Q8WWB3-2"/>
    <property type="nucleotide sequence ID" value="XM_005269549.5"/>
</dbReference>
<dbReference type="RefSeq" id="XP_005269607.1">
    <molecule id="Q8WWB3-2"/>
    <property type="nucleotide sequence ID" value="XM_005269550.5"/>
</dbReference>
<dbReference type="RefSeq" id="XP_011537636.1">
    <molecule id="Q8WWB3-2"/>
    <property type="nucleotide sequence ID" value="XM_011539334.3"/>
</dbReference>
<dbReference type="RefSeq" id="XP_011537637.1">
    <molecule id="Q8WWB3-1"/>
    <property type="nucleotide sequence ID" value="XM_011539335.2"/>
</dbReference>
<dbReference type="RefSeq" id="XP_047280611.1">
    <molecule id="Q8WWB3-1"/>
    <property type="nucleotide sequence ID" value="XM_047424655.1"/>
</dbReference>
<dbReference type="RefSeq" id="XP_054220877.1">
    <molecule id="Q8WWB3-2"/>
    <property type="nucleotide sequence ID" value="XM_054364902.1"/>
</dbReference>
<dbReference type="RefSeq" id="XP_054220878.1">
    <molecule id="Q8WWB3-2"/>
    <property type="nucleotide sequence ID" value="XM_054364903.1"/>
</dbReference>
<dbReference type="RefSeq" id="XP_054220879.1">
    <molecule id="Q8WWB3-2"/>
    <property type="nucleotide sequence ID" value="XM_054364904.1"/>
</dbReference>
<dbReference type="RefSeq" id="XP_054220880.1">
    <molecule id="Q8WWB3-1"/>
    <property type="nucleotide sequence ID" value="XM_054364905.1"/>
</dbReference>
<dbReference type="RefSeq" id="XP_054220882.1">
    <molecule id="Q8WWB3-1"/>
    <property type="nucleotide sequence ID" value="XM_054364907.1"/>
</dbReference>
<dbReference type="SMR" id="Q8WWB3"/>
<dbReference type="BioGRID" id="126791">
    <property type="interactions" value="40"/>
</dbReference>
<dbReference type="ComplexPortal" id="CPX-8163">
    <property type="entry name" value="Radial spoke complex, ciliiar variant"/>
</dbReference>
<dbReference type="ComplexPortal" id="CPX-8164">
    <property type="entry name" value="Radial spoke complex, flagellar variant"/>
</dbReference>
<dbReference type="FunCoup" id="Q8WWB3">
    <property type="interactions" value="12"/>
</dbReference>
<dbReference type="IntAct" id="Q8WWB3">
    <property type="interactions" value="34"/>
</dbReference>
<dbReference type="STRING" id="9606.ENSP00000361278"/>
<dbReference type="PhosphoSitePlus" id="Q8WWB3"/>
<dbReference type="BioMuta" id="DYDC1"/>
<dbReference type="DMDM" id="74751572"/>
<dbReference type="jPOST" id="Q8WWB3"/>
<dbReference type="MassIVE" id="Q8WWB3"/>
<dbReference type="PaxDb" id="9606-ENSP00000361278"/>
<dbReference type="PeptideAtlas" id="Q8WWB3"/>
<dbReference type="ProteomicsDB" id="1890"/>
<dbReference type="ProteomicsDB" id="74872">
    <molecule id="Q8WWB3-1"/>
</dbReference>
<dbReference type="Antibodypedia" id="29980">
    <property type="antibodies" value="177 antibodies from 28 providers"/>
</dbReference>
<dbReference type="DNASU" id="143241"/>
<dbReference type="Ensembl" id="ENST00000372202.6">
    <molecule id="Q8WWB3-1"/>
    <property type="protein sequence ID" value="ENSP00000361276.1"/>
    <property type="gene ID" value="ENSG00000170788.14"/>
</dbReference>
<dbReference type="Ensembl" id="ENST00000372204.7">
    <molecule id="Q8WWB3-1"/>
    <property type="protein sequence ID" value="ENSP00000361278.3"/>
    <property type="gene ID" value="ENSG00000170788.14"/>
</dbReference>
<dbReference type="Ensembl" id="ENST00000421924.6">
    <molecule id="Q8WWB3-1"/>
    <property type="protein sequence ID" value="ENSP00000402890.3"/>
    <property type="gene ID" value="ENSG00000170788.14"/>
</dbReference>
<dbReference type="GeneID" id="143241"/>
<dbReference type="KEGG" id="hsa:143241"/>
<dbReference type="MANE-Select" id="ENST00000372202.6">
    <property type="protein sequence ID" value="ENSP00000361276.1"/>
    <property type="RefSeq nucleotide sequence ID" value="NM_001269053.2"/>
    <property type="RefSeq protein sequence ID" value="NP_001255982.1"/>
</dbReference>
<dbReference type="UCSC" id="uc001kbx.6">
    <molecule id="Q8WWB3-1"/>
    <property type="organism name" value="human"/>
</dbReference>
<dbReference type="AGR" id="HGNC:23460"/>
<dbReference type="CTD" id="143241"/>
<dbReference type="DisGeNET" id="143241"/>
<dbReference type="GeneCards" id="DYDC1"/>
<dbReference type="HGNC" id="HGNC:23460">
    <property type="gene designation" value="DYDC1"/>
</dbReference>
<dbReference type="HPA" id="ENSG00000170788">
    <property type="expression patterns" value="Tissue enriched (testis)"/>
</dbReference>
<dbReference type="MIM" id="615154">
    <property type="type" value="gene"/>
</dbReference>
<dbReference type="neXtProt" id="NX_Q8WWB3"/>
<dbReference type="OpenTargets" id="ENSG00000170788"/>
<dbReference type="PharmGKB" id="PA134972260"/>
<dbReference type="VEuPathDB" id="HostDB:ENSG00000170788"/>
<dbReference type="eggNOG" id="ENOG502S3U3">
    <property type="taxonomic scope" value="Eukaryota"/>
</dbReference>
<dbReference type="GeneTree" id="ENSGT00940000161631"/>
<dbReference type="HOGENOM" id="CLU_117703_1_0_1"/>
<dbReference type="InParanoid" id="Q8WWB3"/>
<dbReference type="OMA" id="ELMFQQQ"/>
<dbReference type="OrthoDB" id="432281at2759"/>
<dbReference type="PAN-GO" id="Q8WWB3">
    <property type="GO annotations" value="2 GO annotations based on evolutionary models"/>
</dbReference>
<dbReference type="PhylomeDB" id="Q8WWB3"/>
<dbReference type="TreeFam" id="TF330747"/>
<dbReference type="PathwayCommons" id="Q8WWB3"/>
<dbReference type="SignaLink" id="Q8WWB3"/>
<dbReference type="SIGNOR" id="Q8WWB3"/>
<dbReference type="BioGRID-ORCS" id="143241">
    <property type="hits" value="32 hits in 1134 CRISPR screens"/>
</dbReference>
<dbReference type="ChiTaRS" id="DYDC1">
    <property type="organism name" value="human"/>
</dbReference>
<dbReference type="GenomeRNAi" id="143241"/>
<dbReference type="Pharos" id="Q8WWB3">
    <property type="development level" value="Tdark"/>
</dbReference>
<dbReference type="PRO" id="PR:Q8WWB3"/>
<dbReference type="Proteomes" id="UP000005640">
    <property type="component" value="Chromosome 10"/>
</dbReference>
<dbReference type="RNAct" id="Q8WWB3">
    <property type="molecule type" value="protein"/>
</dbReference>
<dbReference type="Bgee" id="ENSG00000170788">
    <property type="expression patterns" value="Expressed in left testis and 69 other cell types or tissues"/>
</dbReference>
<dbReference type="ExpressionAtlas" id="Q8WWB3">
    <property type="expression patterns" value="baseline and differential"/>
</dbReference>
<dbReference type="GO" id="GO:0031514">
    <property type="term" value="C:motile cilium"/>
    <property type="evidence" value="ECO:0007669"/>
    <property type="project" value="UniProtKB-KW"/>
</dbReference>
<dbReference type="GO" id="GO:0001534">
    <property type="term" value="C:radial spoke"/>
    <property type="evidence" value="ECO:0000250"/>
    <property type="project" value="UniProtKB"/>
</dbReference>
<dbReference type="GO" id="GO:0048188">
    <property type="term" value="C:Set1C/COMPASS complex"/>
    <property type="evidence" value="ECO:0007669"/>
    <property type="project" value="InterPro"/>
</dbReference>
<dbReference type="CDD" id="cd22966">
    <property type="entry name" value="DD_DYDC-like"/>
    <property type="match status" value="1"/>
</dbReference>
<dbReference type="FunFam" id="1.20.890.10:FF:000009">
    <property type="entry name" value="DPY30 domain-containing protein 1"/>
    <property type="match status" value="1"/>
</dbReference>
<dbReference type="Gene3D" id="1.20.890.10">
    <property type="entry name" value="cAMP-dependent protein kinase regulatory subunit, dimerization-anchoring domain"/>
    <property type="match status" value="1"/>
</dbReference>
<dbReference type="InterPro" id="IPR007858">
    <property type="entry name" value="Dpy-30_motif"/>
</dbReference>
<dbReference type="InterPro" id="IPR049630">
    <property type="entry name" value="DYDC-like_DD"/>
</dbReference>
<dbReference type="InterPro" id="IPR037856">
    <property type="entry name" value="Sdc1/DPY30"/>
</dbReference>
<dbReference type="PANTHER" id="PTHR23356:SF4">
    <property type="entry name" value="DPY30 DOMAIN-CONTAINING PROTEIN 1"/>
    <property type="match status" value="1"/>
</dbReference>
<dbReference type="PANTHER" id="PTHR23356">
    <property type="entry name" value="DPY30-RELATED"/>
    <property type="match status" value="1"/>
</dbReference>
<dbReference type="Pfam" id="PF05186">
    <property type="entry name" value="Dpy-30"/>
    <property type="match status" value="1"/>
</dbReference>
<reference key="1">
    <citation type="submission" date="2003-04" db="EMBL/GenBank/DDBJ databases">
        <title>A new spermatogenesis-related gene.</title>
        <authorList>
            <person name="Tian X.Y."/>
            <person name="Qiao Y."/>
            <person name="Le X.N."/>
            <person name="Miao S.Y."/>
            <person name="Wang L.F."/>
        </authorList>
    </citation>
    <scope>NUCLEOTIDE SEQUENCE [LARGE SCALE MRNA] (ISOFORM 1)</scope>
    <source>
        <tissue>Testis</tissue>
    </source>
</reference>
<reference key="2">
    <citation type="journal article" date="2004" name="Nat. Genet.">
        <title>Complete sequencing and characterization of 21,243 full-length human cDNAs.</title>
        <authorList>
            <person name="Ota T."/>
            <person name="Suzuki Y."/>
            <person name="Nishikawa T."/>
            <person name="Otsuki T."/>
            <person name="Sugiyama T."/>
            <person name="Irie R."/>
            <person name="Wakamatsu A."/>
            <person name="Hayashi K."/>
            <person name="Sato H."/>
            <person name="Nagai K."/>
            <person name="Kimura K."/>
            <person name="Makita H."/>
            <person name="Sekine M."/>
            <person name="Obayashi M."/>
            <person name="Nishi T."/>
            <person name="Shibahara T."/>
            <person name="Tanaka T."/>
            <person name="Ishii S."/>
            <person name="Yamamoto J."/>
            <person name="Saito K."/>
            <person name="Kawai Y."/>
            <person name="Isono Y."/>
            <person name="Nakamura Y."/>
            <person name="Nagahari K."/>
            <person name="Murakami K."/>
            <person name="Yasuda T."/>
            <person name="Iwayanagi T."/>
            <person name="Wagatsuma M."/>
            <person name="Shiratori A."/>
            <person name="Sudo H."/>
            <person name="Hosoiri T."/>
            <person name="Kaku Y."/>
            <person name="Kodaira H."/>
            <person name="Kondo H."/>
            <person name="Sugawara M."/>
            <person name="Takahashi M."/>
            <person name="Kanda K."/>
            <person name="Yokoi T."/>
            <person name="Furuya T."/>
            <person name="Kikkawa E."/>
            <person name="Omura Y."/>
            <person name="Abe K."/>
            <person name="Kamihara K."/>
            <person name="Katsuta N."/>
            <person name="Sato K."/>
            <person name="Tanikawa M."/>
            <person name="Yamazaki M."/>
            <person name="Ninomiya K."/>
            <person name="Ishibashi T."/>
            <person name="Yamashita H."/>
            <person name="Murakawa K."/>
            <person name="Fujimori K."/>
            <person name="Tanai H."/>
            <person name="Kimata M."/>
            <person name="Watanabe M."/>
            <person name="Hiraoka S."/>
            <person name="Chiba Y."/>
            <person name="Ishida S."/>
            <person name="Ono Y."/>
            <person name="Takiguchi S."/>
            <person name="Watanabe S."/>
            <person name="Yosida M."/>
            <person name="Hotuta T."/>
            <person name="Kusano J."/>
            <person name="Kanehori K."/>
            <person name="Takahashi-Fujii A."/>
            <person name="Hara H."/>
            <person name="Tanase T.-O."/>
            <person name="Nomura Y."/>
            <person name="Togiya S."/>
            <person name="Komai F."/>
            <person name="Hara R."/>
            <person name="Takeuchi K."/>
            <person name="Arita M."/>
            <person name="Imose N."/>
            <person name="Musashino K."/>
            <person name="Yuuki H."/>
            <person name="Oshima A."/>
            <person name="Sasaki N."/>
            <person name="Aotsuka S."/>
            <person name="Yoshikawa Y."/>
            <person name="Matsunawa H."/>
            <person name="Ichihara T."/>
            <person name="Shiohata N."/>
            <person name="Sano S."/>
            <person name="Moriya S."/>
            <person name="Momiyama H."/>
            <person name="Satoh N."/>
            <person name="Takami S."/>
            <person name="Terashima Y."/>
            <person name="Suzuki O."/>
            <person name="Nakagawa S."/>
            <person name="Senoh A."/>
            <person name="Mizoguchi H."/>
            <person name="Goto Y."/>
            <person name="Shimizu F."/>
            <person name="Wakebe H."/>
            <person name="Hishigaki H."/>
            <person name="Watanabe T."/>
            <person name="Sugiyama A."/>
            <person name="Takemoto M."/>
            <person name="Kawakami B."/>
            <person name="Yamazaki M."/>
            <person name="Watanabe K."/>
            <person name="Kumagai A."/>
            <person name="Itakura S."/>
            <person name="Fukuzumi Y."/>
            <person name="Fujimori Y."/>
            <person name="Komiyama M."/>
            <person name="Tashiro H."/>
            <person name="Tanigami A."/>
            <person name="Fujiwara T."/>
            <person name="Ono T."/>
            <person name="Yamada K."/>
            <person name="Fujii Y."/>
            <person name="Ozaki K."/>
            <person name="Hirao M."/>
            <person name="Ohmori Y."/>
            <person name="Kawabata A."/>
            <person name="Hikiji T."/>
            <person name="Kobatake N."/>
            <person name="Inagaki H."/>
            <person name="Ikema Y."/>
            <person name="Okamoto S."/>
            <person name="Okitani R."/>
            <person name="Kawakami T."/>
            <person name="Noguchi S."/>
            <person name="Itoh T."/>
            <person name="Shigeta K."/>
            <person name="Senba T."/>
            <person name="Matsumura K."/>
            <person name="Nakajima Y."/>
            <person name="Mizuno T."/>
            <person name="Morinaga M."/>
            <person name="Sasaki M."/>
            <person name="Togashi T."/>
            <person name="Oyama M."/>
            <person name="Hata H."/>
            <person name="Watanabe M."/>
            <person name="Komatsu T."/>
            <person name="Mizushima-Sugano J."/>
            <person name="Satoh T."/>
            <person name="Shirai Y."/>
            <person name="Takahashi Y."/>
            <person name="Nakagawa K."/>
            <person name="Okumura K."/>
            <person name="Nagase T."/>
            <person name="Nomura N."/>
            <person name="Kikuchi H."/>
            <person name="Masuho Y."/>
            <person name="Yamashita R."/>
            <person name="Nakai K."/>
            <person name="Yada T."/>
            <person name="Nakamura Y."/>
            <person name="Ohara O."/>
            <person name="Isogai T."/>
            <person name="Sugano S."/>
        </authorList>
    </citation>
    <scope>NUCLEOTIDE SEQUENCE [LARGE SCALE MRNA] (ISOFORMS 1 AND 2)</scope>
    <source>
        <tissue>Testis</tissue>
    </source>
</reference>
<reference key="3">
    <citation type="journal article" date="2004" name="Nature">
        <title>The DNA sequence and comparative analysis of human chromosome 10.</title>
        <authorList>
            <person name="Deloukas P."/>
            <person name="Earthrowl M.E."/>
            <person name="Grafham D.V."/>
            <person name="Rubenfield M."/>
            <person name="French L."/>
            <person name="Steward C.A."/>
            <person name="Sims S.K."/>
            <person name="Jones M.C."/>
            <person name="Searle S."/>
            <person name="Scott C."/>
            <person name="Howe K."/>
            <person name="Hunt S.E."/>
            <person name="Andrews T.D."/>
            <person name="Gilbert J.G.R."/>
            <person name="Swarbreck D."/>
            <person name="Ashurst J.L."/>
            <person name="Taylor A."/>
            <person name="Battles J."/>
            <person name="Bird C.P."/>
            <person name="Ainscough R."/>
            <person name="Almeida J.P."/>
            <person name="Ashwell R.I.S."/>
            <person name="Ambrose K.D."/>
            <person name="Babbage A.K."/>
            <person name="Bagguley C.L."/>
            <person name="Bailey J."/>
            <person name="Banerjee R."/>
            <person name="Bates K."/>
            <person name="Beasley H."/>
            <person name="Bray-Allen S."/>
            <person name="Brown A.J."/>
            <person name="Brown J.Y."/>
            <person name="Burford D.C."/>
            <person name="Burrill W."/>
            <person name="Burton J."/>
            <person name="Cahill P."/>
            <person name="Camire D."/>
            <person name="Carter N.P."/>
            <person name="Chapman J.C."/>
            <person name="Clark S.Y."/>
            <person name="Clarke G."/>
            <person name="Clee C.M."/>
            <person name="Clegg S."/>
            <person name="Corby N."/>
            <person name="Coulson A."/>
            <person name="Dhami P."/>
            <person name="Dutta I."/>
            <person name="Dunn M."/>
            <person name="Faulkner L."/>
            <person name="Frankish A."/>
            <person name="Frankland J.A."/>
            <person name="Garner P."/>
            <person name="Garnett J."/>
            <person name="Gribble S."/>
            <person name="Griffiths C."/>
            <person name="Grocock R."/>
            <person name="Gustafson E."/>
            <person name="Hammond S."/>
            <person name="Harley J.L."/>
            <person name="Hart E."/>
            <person name="Heath P.D."/>
            <person name="Ho T.P."/>
            <person name="Hopkins B."/>
            <person name="Horne J."/>
            <person name="Howden P.J."/>
            <person name="Huckle E."/>
            <person name="Hynds C."/>
            <person name="Johnson C."/>
            <person name="Johnson D."/>
            <person name="Kana A."/>
            <person name="Kay M."/>
            <person name="Kimberley A.M."/>
            <person name="Kershaw J.K."/>
            <person name="Kokkinaki M."/>
            <person name="Laird G.K."/>
            <person name="Lawlor S."/>
            <person name="Lee H.M."/>
            <person name="Leongamornlert D.A."/>
            <person name="Laird G."/>
            <person name="Lloyd C."/>
            <person name="Lloyd D.M."/>
            <person name="Loveland J."/>
            <person name="Lovell J."/>
            <person name="McLaren S."/>
            <person name="McLay K.E."/>
            <person name="McMurray A."/>
            <person name="Mashreghi-Mohammadi M."/>
            <person name="Matthews L."/>
            <person name="Milne S."/>
            <person name="Nickerson T."/>
            <person name="Nguyen M."/>
            <person name="Overton-Larty E."/>
            <person name="Palmer S.A."/>
            <person name="Pearce A.V."/>
            <person name="Peck A.I."/>
            <person name="Pelan S."/>
            <person name="Phillimore B."/>
            <person name="Porter K."/>
            <person name="Rice C.M."/>
            <person name="Rogosin A."/>
            <person name="Ross M.T."/>
            <person name="Sarafidou T."/>
            <person name="Sehra H.K."/>
            <person name="Shownkeen R."/>
            <person name="Skuce C.D."/>
            <person name="Smith M."/>
            <person name="Standring L."/>
            <person name="Sycamore N."/>
            <person name="Tester J."/>
            <person name="Thorpe A."/>
            <person name="Torcasso W."/>
            <person name="Tracey A."/>
            <person name="Tromans A."/>
            <person name="Tsolas J."/>
            <person name="Wall M."/>
            <person name="Walsh J."/>
            <person name="Wang H."/>
            <person name="Weinstock K."/>
            <person name="West A.P."/>
            <person name="Willey D.L."/>
            <person name="Whitehead S.L."/>
            <person name="Wilming L."/>
            <person name="Wray P.W."/>
            <person name="Young L."/>
            <person name="Chen Y."/>
            <person name="Lovering R.C."/>
            <person name="Moschonas N.K."/>
            <person name="Siebert R."/>
            <person name="Fechtel K."/>
            <person name="Bentley D."/>
            <person name="Durbin R.M."/>
            <person name="Hubbard T."/>
            <person name="Doucette-Stamm L."/>
            <person name="Beck S."/>
            <person name="Smith D.R."/>
            <person name="Rogers J."/>
        </authorList>
    </citation>
    <scope>NUCLEOTIDE SEQUENCE [LARGE SCALE GENOMIC DNA]</scope>
</reference>
<reference key="4">
    <citation type="journal article" date="2004" name="Genome Res.">
        <title>The status, quality, and expansion of the NIH full-length cDNA project: the Mammalian Gene Collection (MGC).</title>
        <authorList>
            <consortium name="The MGC Project Team"/>
        </authorList>
    </citation>
    <scope>NUCLEOTIDE SEQUENCE [LARGE SCALE MRNA] (ISOFORM 1)</scope>
    <source>
        <tissue>Testis</tissue>
    </source>
</reference>
<reference key="5">
    <citation type="journal article" date="2009" name="Eur. J. Cell Biol.">
        <title>Interaction of SH3P13 and DYDC1 protein: a germ cell component that regulates acrosome biogenesis during spermiogenesis.</title>
        <authorList>
            <person name="Li S."/>
            <person name="Qiao Y."/>
            <person name="Di Q."/>
            <person name="Le X."/>
            <person name="Zhang L."/>
            <person name="Zhang X."/>
            <person name="Zhang C."/>
            <person name="Cheng J."/>
            <person name="Zong S."/>
            <person name="Koide S.S."/>
            <person name="Miao S."/>
            <person name="Wang L."/>
        </authorList>
    </citation>
    <scope>FUNCTION</scope>
    <scope>INTERACTION WITH SH3GL3</scope>
    <scope>TISSUE SPECIFICITY</scope>
</reference>
<accession>Q8WWB3</accession>
<accession>A8K927</accession>
<accession>Q5QP03</accession>
<accession>Q5QP04</accession>
<accession>Q6WNP4</accession>
<accession>Q6ZU87</accession>
<sequence length="177" mass="20893">MESIYLQKHLGACLTQGLAEVARVRPVDPIEYLALWIYKYKENVTMEQLRQKEMAKLERERELALMEQEMMERLKAEELLLQQQQLALQLELEMQEKERQRIQELQRAQEQLGKEMRMNMENLVRNEDILHSEEATLDSGKTLAEISDRYGAPNLSRVEELDEPMFSDIALNIDQDL</sequence>
<gene>
    <name type="primary">DYDC1</name>
    <name type="synonym">DPY30D1</name>
    <name type="ORF">RSD-9</name>
    <name type="ORF">RSD9</name>
</gene>
<evidence type="ECO:0000250" key="1">
    <source>
        <dbReference type="UniProtKB" id="Q9D9T0"/>
    </source>
</evidence>
<evidence type="ECO:0000269" key="2">
    <source>
    </source>
</evidence>
<evidence type="ECO:0000303" key="3">
    <source>
    </source>
</evidence>
<evidence type="ECO:0000305" key="4"/>
<organism>
    <name type="scientific">Homo sapiens</name>
    <name type="common">Human</name>
    <dbReference type="NCBI Taxonomy" id="9606"/>
    <lineage>
        <taxon>Eukaryota</taxon>
        <taxon>Metazoa</taxon>
        <taxon>Chordata</taxon>
        <taxon>Craniata</taxon>
        <taxon>Vertebrata</taxon>
        <taxon>Euteleostomi</taxon>
        <taxon>Mammalia</taxon>
        <taxon>Eutheria</taxon>
        <taxon>Euarchontoglires</taxon>
        <taxon>Primates</taxon>
        <taxon>Haplorrhini</taxon>
        <taxon>Catarrhini</taxon>
        <taxon>Hominidae</taxon>
        <taxon>Homo</taxon>
    </lineage>
</organism>
<protein>
    <recommendedName>
        <fullName>DPY30 domain-containing protein 1</fullName>
    </recommendedName>
</protein>